<feature type="signal peptide" evidence="7 8 9">
    <location>
        <begin position="1"/>
        <end position="25"/>
    </location>
</feature>
<feature type="chain" id="PRO_0000030969" description="Extracellular ribonuclease LE">
    <location>
        <begin position="26"/>
        <end position="230"/>
    </location>
</feature>
<feature type="active site" description="Proton donor" evidence="3 4">
    <location>
        <position position="64"/>
    </location>
</feature>
<feature type="active site" evidence="1">
    <location>
        <position position="118"/>
    </location>
</feature>
<feature type="active site" description="Proton acceptor" evidence="3 4">
    <location>
        <position position="122"/>
    </location>
</feature>
<feature type="binding site" evidence="2">
    <location>
        <position position="37"/>
    </location>
    <ligand>
        <name>RNA</name>
        <dbReference type="ChEBI" id="CHEBI:33697"/>
    </ligand>
    <ligandPart>
        <name>a 3'-terminal ribonucleotide 3'-phosphate residue</name>
        <dbReference type="ChEBI" id="CHEBI:83062"/>
    </ligandPart>
</feature>
<feature type="binding site" evidence="2">
    <location>
        <position position="64"/>
    </location>
    <ligand>
        <name>RNA</name>
        <dbReference type="ChEBI" id="CHEBI:33697"/>
    </ligand>
    <ligandPart>
        <name>a 3'-terminal ribonucleotide 3'-phosphate residue</name>
        <dbReference type="ChEBI" id="CHEBI:83062"/>
    </ligandPart>
</feature>
<feature type="binding site" evidence="2">
    <location>
        <position position="114"/>
    </location>
    <ligand>
        <name>RNA</name>
        <dbReference type="ChEBI" id="CHEBI:33697"/>
    </ligand>
    <ligandPart>
        <name>a 3'-terminal ribonucleotide 3'-phosphate residue</name>
        <dbReference type="ChEBI" id="CHEBI:83062"/>
    </ligandPart>
</feature>
<feature type="binding site" evidence="2">
    <location>
        <begin position="117"/>
        <end position="118"/>
    </location>
    <ligand>
        <name>RNA</name>
        <dbReference type="ChEBI" id="CHEBI:33697"/>
    </ligand>
    <ligandPart>
        <name>a 3'-terminal ribonucleotide 3'-phosphate residue</name>
        <dbReference type="ChEBI" id="CHEBI:83062"/>
    </ligandPart>
</feature>
<feature type="binding site" evidence="2">
    <location>
        <begin position="121"/>
        <end position="122"/>
    </location>
    <ligand>
        <name>RNA</name>
        <dbReference type="ChEBI" id="CHEBI:33697"/>
    </ligand>
    <ligandPart>
        <name>a 3'-terminal ribonucleotide 3'-phosphate residue</name>
        <dbReference type="ChEBI" id="CHEBI:83062"/>
    </ligandPart>
</feature>
<feature type="disulfide bond" evidence="6 11">
    <location>
        <begin position="43"/>
        <end position="49"/>
    </location>
</feature>
<feature type="disulfide bond" evidence="6 11">
    <location>
        <begin position="50"/>
        <end position="106"/>
    </location>
</feature>
<feature type="disulfide bond" evidence="6 11">
    <location>
        <begin position="79"/>
        <end position="125"/>
    </location>
</feature>
<feature type="disulfide bond" evidence="6 11">
    <location>
        <begin position="186"/>
        <end position="221"/>
    </location>
</feature>
<feature type="disulfide bond" evidence="6 11">
    <location>
        <begin position="202"/>
        <end position="213"/>
    </location>
</feature>
<feature type="sequence conflict" description="In Ref. 3; AA sequence." evidence="10" ref="3">
    <original>S</original>
    <variation>G</variation>
    <location>
        <position position="41"/>
    </location>
</feature>
<feature type="sequence conflict" description="In Ref. 3; AA sequence." evidence="10" ref="3">
    <original>C</original>
    <variation>Y</variation>
    <location>
        <position position="43"/>
    </location>
</feature>
<feature type="sequence conflict" description="In Ref. 3; AA sequence." evidence="10" ref="3">
    <original>T</original>
    <variation>TP</variation>
    <location>
        <position position="45"/>
    </location>
</feature>
<feature type="sequence conflict" description="In Ref. 3; AA sequence." evidence="10" ref="3">
    <original>S</original>
    <variation>P</variation>
    <location>
        <position position="48"/>
    </location>
</feature>
<feature type="strand" evidence="12">
    <location>
        <begin position="30"/>
        <end position="37"/>
    </location>
</feature>
<feature type="helix" evidence="12">
    <location>
        <begin position="39"/>
        <end position="42"/>
    </location>
</feature>
<feature type="strand" evidence="12">
    <location>
        <begin position="43"/>
        <end position="47"/>
    </location>
</feature>
<feature type="strand" evidence="12">
    <location>
        <begin position="62"/>
        <end position="69"/>
    </location>
</feature>
<feature type="helix" evidence="12">
    <location>
        <begin position="87"/>
        <end position="93"/>
    </location>
</feature>
<feature type="helix" evidence="12">
    <location>
        <begin position="94"/>
        <end position="100"/>
    </location>
</feature>
<feature type="helix" evidence="12">
    <location>
        <begin position="112"/>
        <end position="121"/>
    </location>
</feature>
<feature type="helix" evidence="12">
    <location>
        <begin position="123"/>
        <end position="126"/>
    </location>
</feature>
<feature type="turn" evidence="12">
    <location>
        <begin position="127"/>
        <end position="129"/>
    </location>
</feature>
<feature type="helix" evidence="12">
    <location>
        <begin position="133"/>
        <end position="144"/>
    </location>
</feature>
<feature type="helix" evidence="12">
    <location>
        <begin position="149"/>
        <end position="155"/>
    </location>
</feature>
<feature type="strand" evidence="12">
    <location>
        <begin position="160"/>
        <end position="162"/>
    </location>
</feature>
<feature type="strand" evidence="12">
    <location>
        <begin position="164"/>
        <end position="166"/>
    </location>
</feature>
<feature type="helix" evidence="12">
    <location>
        <begin position="167"/>
        <end position="178"/>
    </location>
</feature>
<feature type="strand" evidence="12">
    <location>
        <begin position="183"/>
        <end position="188"/>
    </location>
</feature>
<feature type="strand" evidence="12">
    <location>
        <begin position="194"/>
        <end position="204"/>
    </location>
</feature>
<feature type="strand" evidence="12">
    <location>
        <begin position="207"/>
        <end position="211"/>
    </location>
</feature>
<feature type="strand" evidence="12">
    <location>
        <begin position="223"/>
        <end position="226"/>
    </location>
</feature>
<comment type="function">
    <text>Probably involved in plant phosphate-starvation rescue system.</text>
</comment>
<comment type="catalytic activity">
    <reaction evidence="4 5">
        <text>a ribonucleotidyl-ribonucleotide-RNA + H2O = a 3'-end 3'-phospho-ribonucleotide-RNA + a 5'-end dephospho-ribonucleoside-RNA + H(+)</text>
        <dbReference type="Rhea" id="RHEA:68052"/>
        <dbReference type="Rhea" id="RHEA-COMP:10463"/>
        <dbReference type="Rhea" id="RHEA-COMP:13936"/>
        <dbReference type="Rhea" id="RHEA-COMP:17355"/>
        <dbReference type="ChEBI" id="CHEBI:15377"/>
        <dbReference type="ChEBI" id="CHEBI:15378"/>
        <dbReference type="ChEBI" id="CHEBI:83062"/>
        <dbReference type="ChEBI" id="CHEBI:138284"/>
        <dbReference type="ChEBI" id="CHEBI:173118"/>
        <dbReference type="EC" id="4.6.1.19"/>
    </reaction>
</comment>
<comment type="subcellular location">
    <subcellularLocation>
        <location evidence="9">Secreted</location>
        <location evidence="9">Extracellular space</location>
    </subcellularLocation>
    <subcellularLocation>
        <location evidence="9">Secreted</location>
        <location evidence="9">Cell wall</location>
    </subcellularLocation>
</comment>
<comment type="induction">
    <text>By phosphate starvation.</text>
</comment>
<comment type="similarity">
    <text evidence="10">Belongs to the RNase T2 family.</text>
</comment>
<dbReference type="EC" id="4.6.1.19" evidence="5"/>
<dbReference type="EMBL" id="X79337">
    <property type="protein sequence ID" value="CAA55895.1"/>
    <property type="molecule type" value="mRNA"/>
</dbReference>
<dbReference type="PIR" id="S53506">
    <property type="entry name" value="S53506"/>
</dbReference>
<dbReference type="RefSeq" id="NP_001234195.1">
    <property type="nucleotide sequence ID" value="NM_001247266.2"/>
</dbReference>
<dbReference type="PDB" id="1DIX">
    <property type="method" value="X-ray"/>
    <property type="resolution" value="1.65 A"/>
    <property type="chains" value="A=27-230"/>
</dbReference>
<dbReference type="PDBsum" id="1DIX"/>
<dbReference type="SMR" id="P80022"/>
<dbReference type="FunCoup" id="P80022">
    <property type="interactions" value="876"/>
</dbReference>
<dbReference type="STRING" id="4081.P80022"/>
<dbReference type="PaxDb" id="4081-Solyc05g007950.2.1"/>
<dbReference type="EnsemblPlants" id="Solyc05g007950.3.1">
    <property type="protein sequence ID" value="Solyc05g007950.3.1"/>
    <property type="gene ID" value="Solyc05g007950.3"/>
</dbReference>
<dbReference type="GeneID" id="544098"/>
<dbReference type="Gramene" id="Solyc05g007950.3.1">
    <property type="protein sequence ID" value="Solyc05g007950.3.1"/>
    <property type="gene ID" value="Solyc05g007950.3"/>
</dbReference>
<dbReference type="KEGG" id="sly:544098"/>
<dbReference type="eggNOG" id="KOG1642">
    <property type="taxonomic scope" value="Eukaryota"/>
</dbReference>
<dbReference type="HOGENOM" id="CLU_069912_2_1_1"/>
<dbReference type="InParanoid" id="P80022"/>
<dbReference type="OMA" id="TNCHIGS"/>
<dbReference type="OrthoDB" id="435754at2759"/>
<dbReference type="PhylomeDB" id="P80022"/>
<dbReference type="BRENDA" id="4.6.1.19">
    <property type="organism ID" value="3101"/>
</dbReference>
<dbReference type="EvolutionaryTrace" id="P80022"/>
<dbReference type="Proteomes" id="UP000004994">
    <property type="component" value="Chromosome 5"/>
</dbReference>
<dbReference type="ExpressionAtlas" id="P80022">
    <property type="expression patterns" value="baseline and differential"/>
</dbReference>
<dbReference type="GO" id="GO:0005576">
    <property type="term" value="C:extracellular region"/>
    <property type="evidence" value="ECO:0000318"/>
    <property type="project" value="GO_Central"/>
</dbReference>
<dbReference type="GO" id="GO:0033897">
    <property type="term" value="F:ribonuclease T2 activity"/>
    <property type="evidence" value="ECO:0007669"/>
    <property type="project" value="UniProtKB-EC"/>
</dbReference>
<dbReference type="GO" id="GO:0003723">
    <property type="term" value="F:RNA binding"/>
    <property type="evidence" value="ECO:0007669"/>
    <property type="project" value="InterPro"/>
</dbReference>
<dbReference type="GO" id="GO:0004521">
    <property type="term" value="F:RNA endonuclease activity"/>
    <property type="evidence" value="ECO:0000318"/>
    <property type="project" value="GO_Central"/>
</dbReference>
<dbReference type="GO" id="GO:0006401">
    <property type="term" value="P:RNA catabolic process"/>
    <property type="evidence" value="ECO:0000318"/>
    <property type="project" value="GO_Central"/>
</dbReference>
<dbReference type="CDD" id="cd01061">
    <property type="entry name" value="RNase_T2_euk"/>
    <property type="match status" value="1"/>
</dbReference>
<dbReference type="FunFam" id="3.90.730.10:FF:000003">
    <property type="entry name" value="Ribonuclease 3"/>
    <property type="match status" value="1"/>
</dbReference>
<dbReference type="Gene3D" id="3.90.730.10">
    <property type="entry name" value="Ribonuclease T2-like"/>
    <property type="match status" value="1"/>
</dbReference>
<dbReference type="InterPro" id="IPR033697">
    <property type="entry name" value="Ribonuclease_T2_eukaryotic"/>
</dbReference>
<dbReference type="InterPro" id="IPR001568">
    <property type="entry name" value="RNase_T2-like"/>
</dbReference>
<dbReference type="InterPro" id="IPR036430">
    <property type="entry name" value="RNase_T2-like_sf"/>
</dbReference>
<dbReference type="InterPro" id="IPR018188">
    <property type="entry name" value="RNase_T2_His_AS_1"/>
</dbReference>
<dbReference type="InterPro" id="IPR033130">
    <property type="entry name" value="RNase_T2_His_AS_2"/>
</dbReference>
<dbReference type="PANTHER" id="PTHR11240:SF72">
    <property type="entry name" value="RIBONUCLEASE 1"/>
    <property type="match status" value="1"/>
</dbReference>
<dbReference type="PANTHER" id="PTHR11240">
    <property type="entry name" value="RIBONUCLEASE T2"/>
    <property type="match status" value="1"/>
</dbReference>
<dbReference type="Pfam" id="PF00445">
    <property type="entry name" value="Ribonuclease_T2"/>
    <property type="match status" value="1"/>
</dbReference>
<dbReference type="SUPFAM" id="SSF55895">
    <property type="entry name" value="Ribonuclease Rh-like"/>
    <property type="match status" value="1"/>
</dbReference>
<dbReference type="PROSITE" id="PS00530">
    <property type="entry name" value="RNASE_T2_1"/>
    <property type="match status" value="1"/>
</dbReference>
<dbReference type="PROSITE" id="PS00531">
    <property type="entry name" value="RNASE_T2_2"/>
    <property type="match status" value="1"/>
</dbReference>
<organism>
    <name type="scientific">Solanum lycopersicum</name>
    <name type="common">Tomato</name>
    <name type="synonym">Lycopersicon esculentum</name>
    <dbReference type="NCBI Taxonomy" id="4081"/>
    <lineage>
        <taxon>Eukaryota</taxon>
        <taxon>Viridiplantae</taxon>
        <taxon>Streptophyta</taxon>
        <taxon>Embryophyta</taxon>
        <taxon>Tracheophyta</taxon>
        <taxon>Spermatophyta</taxon>
        <taxon>Magnoliopsida</taxon>
        <taxon>eudicotyledons</taxon>
        <taxon>Gunneridae</taxon>
        <taxon>Pentapetalae</taxon>
        <taxon>asterids</taxon>
        <taxon>lamiids</taxon>
        <taxon>Solanales</taxon>
        <taxon>Solanaceae</taxon>
        <taxon>Solanoideae</taxon>
        <taxon>Solaneae</taxon>
        <taxon>Solanum</taxon>
        <taxon>Solanum subgen. Lycopersicon</taxon>
    </lineage>
</organism>
<reference key="1">
    <citation type="journal article" date="1995" name="Plant Mol. Biol.">
        <title>cDNA structure and regulatory properties of a family of starvation-induced ribonucleases from tomato.</title>
        <authorList>
            <person name="Koeck M."/>
            <person name="Loeffler A."/>
            <person name="Abel S."/>
            <person name="Glund K."/>
        </authorList>
    </citation>
    <scope>NUCLEOTIDE SEQUENCE [MRNA]</scope>
    <scope>PROTEIN SEQUENCE OF 26-74 AND 221-230</scope>
    <source>
        <strain>cv. Lukullus</strain>
        <tissue>Hypocotyl</tissue>
    </source>
</reference>
<reference key="2">
    <citation type="journal article" date="1991" name="Eur. J. Biochem.">
        <title>Amino acid sequence of an extracellular, phosphate-starvation-induced ribonuclease from cultured tomato (Lycopersicon esculentum) cells.</title>
        <authorList>
            <person name="Jost W."/>
            <person name="Bak M."/>
            <person name="Glund K."/>
            <person name="Terpstra P."/>
            <person name="Beintema J.J."/>
        </authorList>
    </citation>
    <scope>PROTEIN SEQUENCE OF 26-230</scope>
    <source>
        <strain>cv. Lukullus</strain>
    </source>
</reference>
<reference key="3">
    <citation type="journal article" date="1997" name="J. Biol. Chem.">
        <title>Differential extraction and protein sequencing reveals major differences in patterns of primary cell wall proteins from plants.</title>
        <authorList>
            <person name="Robertson D."/>
            <person name="Mitchell G.P."/>
            <person name="Gilroy J.S."/>
            <person name="Gerrish C."/>
            <person name="Bolwell G.P."/>
            <person name="Slabas A.R."/>
        </authorList>
    </citation>
    <scope>PROTEIN SEQUENCE OF 26-48</scope>
    <scope>SUBCELLULAR LOCATION</scope>
</reference>
<reference key="4">
    <citation type="journal article" date="2000" name="J. Mol. Biol.">
        <title>Crystal structure of a plant ribonuclease, RNase LE.</title>
        <authorList>
            <person name="Tanaka N."/>
            <person name="Arai J."/>
            <person name="Inokuchi N."/>
            <person name="Koyama T."/>
            <person name="Ohgi K."/>
            <person name="Irie M."/>
            <person name="Nakamura K.T."/>
        </authorList>
    </citation>
    <scope>X-RAY CRYSTALLOGRAPHY (1.65 ANGSTROMS) OF 27-230</scope>
    <scope>DISULFIDE BONDS</scope>
</reference>
<proteinExistence type="evidence at protein level"/>
<protein>
    <recommendedName>
        <fullName>Extracellular ribonuclease LE</fullName>
        <shortName>RNase LE</shortName>
        <ecNumber evidence="5">4.6.1.19</ecNumber>
    </recommendedName>
</protein>
<sequence>MASNSAFSLFLILLIITQCLSVLNAAKDFDFFYFVQQWPGSYCDTKQSCCYPTTGKPAADFGIHGLWPNNNDGTYPSNCDPNSPYDQSQISDLISSMQQNWPTLACPSGSGSTFWSHEWEKHGTCAESVLTNQHAYFKKALDLKNQIDLLSILQGADIHPDGESYDLVNIRNAIKSAIGYTPWIQCNVDQSGNSQLYQVYICVDGSGSSLIECPIFPGGKCGTSIEFPTF</sequence>
<accession>P80022</accession>
<accession>P80801</accession>
<evidence type="ECO:0000250" key="1">
    <source>
        <dbReference type="UniProtKB" id="P08056"/>
    </source>
</evidence>
<evidence type="ECO:0000250" key="2">
    <source>
        <dbReference type="UniProtKB" id="P23540"/>
    </source>
</evidence>
<evidence type="ECO:0000250" key="3">
    <source>
        <dbReference type="UniProtKB" id="Q7SID5"/>
    </source>
</evidence>
<evidence type="ECO:0000255" key="4">
    <source>
        <dbReference type="PROSITE-ProRule" id="PRU10045"/>
    </source>
</evidence>
<evidence type="ECO:0000255" key="5">
    <source>
        <dbReference type="PROSITE-ProRule" id="PRU10046"/>
    </source>
</evidence>
<evidence type="ECO:0000269" key="6">
    <source>
    </source>
</evidence>
<evidence type="ECO:0000269" key="7">
    <source>
    </source>
</evidence>
<evidence type="ECO:0000269" key="8">
    <source>
    </source>
</evidence>
<evidence type="ECO:0000269" key="9">
    <source>
    </source>
</evidence>
<evidence type="ECO:0000305" key="10"/>
<evidence type="ECO:0007744" key="11">
    <source>
        <dbReference type="PDB" id="1DIX"/>
    </source>
</evidence>
<evidence type="ECO:0007829" key="12">
    <source>
        <dbReference type="PDB" id="1DIX"/>
    </source>
</evidence>
<name>RNLE_SOLLC</name>
<keyword id="KW-0002">3D-structure</keyword>
<keyword id="KW-0134">Cell wall</keyword>
<keyword id="KW-0903">Direct protein sequencing</keyword>
<keyword id="KW-1015">Disulfide bond</keyword>
<keyword id="KW-0255">Endonuclease</keyword>
<keyword id="KW-0378">Hydrolase</keyword>
<keyword id="KW-0456">Lyase</keyword>
<keyword id="KW-0540">Nuclease</keyword>
<keyword id="KW-1185">Reference proteome</keyword>
<keyword id="KW-0964">Secreted</keyword>
<keyword id="KW-0732">Signal</keyword>
<keyword id="KW-0346">Stress response</keyword>